<name>YHAM_BACAH</name>
<keyword id="KW-0269">Exonuclease</keyword>
<keyword id="KW-0378">Hydrolase</keyword>
<keyword id="KW-0540">Nuclease</keyword>
<sequence>MKKKIAEYEVGEQVDIFLLIKTATKGIASNGKPFLTVILQDPSGDIEAKLWDVSPEVEKQYVAETIVKVAGDILNYKGRIQLRVKQIRVANENEVTDISDFVEKAPVKKEDMVEKITQYIFEMRNPNIQRLTRHLLNKHQNEFLDYPAATKNHHEFVSGLAYHVVSMLDLAKAISNLYPSLDKDLLYAGVILHDLGKVIELSGPISTTYTLEGNLLGHISIMVNEIGKAADELQIDAEEVLILQHIVLSHHGKAEWGSPKPPLVKEAEILHYIDNLDAKMNMMDRALGRTKPGEYTERVFALDNRSFYKPSFHN</sequence>
<comment type="function">
    <text evidence="1">Shows a 3'-5' exoribonuclease activity.</text>
</comment>
<comment type="similarity">
    <text evidence="1">Belongs to the YhaM family.</text>
</comment>
<reference key="1">
    <citation type="journal article" date="2007" name="J. Bacteriol.">
        <title>The complete genome sequence of Bacillus thuringiensis Al Hakam.</title>
        <authorList>
            <person name="Challacombe J.F."/>
            <person name="Altherr M.R."/>
            <person name="Xie G."/>
            <person name="Bhotika S.S."/>
            <person name="Brown N."/>
            <person name="Bruce D."/>
            <person name="Campbell C.S."/>
            <person name="Campbell M.L."/>
            <person name="Chen J."/>
            <person name="Chertkov O."/>
            <person name="Cleland C."/>
            <person name="Dimitrijevic M."/>
            <person name="Doggett N.A."/>
            <person name="Fawcett J.J."/>
            <person name="Glavina T."/>
            <person name="Goodwin L.A."/>
            <person name="Green L.D."/>
            <person name="Han C.S."/>
            <person name="Hill K.K."/>
            <person name="Hitchcock P."/>
            <person name="Jackson P.J."/>
            <person name="Keim P."/>
            <person name="Kewalramani A.R."/>
            <person name="Longmire J."/>
            <person name="Lucas S."/>
            <person name="Malfatti S."/>
            <person name="Martinez D."/>
            <person name="McMurry K."/>
            <person name="Meincke L.J."/>
            <person name="Misra M."/>
            <person name="Moseman B.L."/>
            <person name="Mundt M."/>
            <person name="Munk A.C."/>
            <person name="Okinaka R.T."/>
            <person name="Parson-Quintana B."/>
            <person name="Reilly L.P."/>
            <person name="Richardson P."/>
            <person name="Robinson D.L."/>
            <person name="Saunders E."/>
            <person name="Tapia R."/>
            <person name="Tesmer J.G."/>
            <person name="Thayer N."/>
            <person name="Thompson L.S."/>
            <person name="Tice H."/>
            <person name="Ticknor L.O."/>
            <person name="Wills P.L."/>
            <person name="Gilna P."/>
            <person name="Brettin T.S."/>
        </authorList>
    </citation>
    <scope>NUCLEOTIDE SEQUENCE [LARGE SCALE GENOMIC DNA]</scope>
    <source>
        <strain>Al Hakam</strain>
    </source>
</reference>
<feature type="chain" id="PRO_1000024348" description="3'-5' exoribonuclease YhaM">
    <location>
        <begin position="1"/>
        <end position="314"/>
    </location>
</feature>
<feature type="domain" description="HD" evidence="2">
    <location>
        <begin position="163"/>
        <end position="279"/>
    </location>
</feature>
<proteinExistence type="inferred from homology"/>
<organism>
    <name type="scientific">Bacillus thuringiensis (strain Al Hakam)</name>
    <dbReference type="NCBI Taxonomy" id="412694"/>
    <lineage>
        <taxon>Bacteria</taxon>
        <taxon>Bacillati</taxon>
        <taxon>Bacillota</taxon>
        <taxon>Bacilli</taxon>
        <taxon>Bacillales</taxon>
        <taxon>Bacillaceae</taxon>
        <taxon>Bacillus</taxon>
        <taxon>Bacillus cereus group</taxon>
    </lineage>
</organism>
<evidence type="ECO:0000255" key="1">
    <source>
        <dbReference type="HAMAP-Rule" id="MF_01427"/>
    </source>
</evidence>
<evidence type="ECO:0000255" key="2">
    <source>
        <dbReference type="PROSITE-ProRule" id="PRU01175"/>
    </source>
</evidence>
<protein>
    <recommendedName>
        <fullName evidence="1">3'-5' exoribonuclease YhaM</fullName>
        <ecNumber evidence="1">3.1.-.-</ecNumber>
    </recommendedName>
</protein>
<gene>
    <name evidence="1" type="primary">yhaM</name>
    <name type="ordered locus">BALH_0905</name>
</gene>
<dbReference type="EC" id="3.1.-.-" evidence="1"/>
<dbReference type="EMBL" id="CP000485">
    <property type="protein sequence ID" value="ABK84273.1"/>
    <property type="molecule type" value="Genomic_DNA"/>
</dbReference>
<dbReference type="RefSeq" id="WP_000726638.1">
    <property type="nucleotide sequence ID" value="NC_008600.1"/>
</dbReference>
<dbReference type="SMR" id="A0RAN0"/>
<dbReference type="GeneID" id="69533483"/>
<dbReference type="KEGG" id="btl:BALH_0905"/>
<dbReference type="HOGENOM" id="CLU_056349_2_0_9"/>
<dbReference type="GO" id="GO:0000175">
    <property type="term" value="F:3'-5'-RNA exonuclease activity"/>
    <property type="evidence" value="ECO:0007669"/>
    <property type="project" value="UniProtKB-UniRule"/>
</dbReference>
<dbReference type="GO" id="GO:0003676">
    <property type="term" value="F:nucleic acid binding"/>
    <property type="evidence" value="ECO:0007669"/>
    <property type="project" value="InterPro"/>
</dbReference>
<dbReference type="GO" id="GO:0031125">
    <property type="term" value="P:rRNA 3'-end processing"/>
    <property type="evidence" value="ECO:0007669"/>
    <property type="project" value="TreeGrafter"/>
</dbReference>
<dbReference type="CDD" id="cd00077">
    <property type="entry name" value="HDc"/>
    <property type="match status" value="1"/>
</dbReference>
<dbReference type="CDD" id="cd04492">
    <property type="entry name" value="YhaM_OBF_like"/>
    <property type="match status" value="1"/>
</dbReference>
<dbReference type="FunFam" id="1.10.3210.10:FF:000008">
    <property type="entry name" value="3'-5' exoribonuclease YhaM"/>
    <property type="match status" value="1"/>
</dbReference>
<dbReference type="Gene3D" id="1.10.3210.10">
    <property type="entry name" value="Hypothetical protein af1432"/>
    <property type="match status" value="1"/>
</dbReference>
<dbReference type="Gene3D" id="2.40.50.140">
    <property type="entry name" value="Nucleic acid-binding proteins"/>
    <property type="match status" value="1"/>
</dbReference>
<dbReference type="HAMAP" id="MF_01427">
    <property type="entry name" value="3_5_Exoribonuc_YhaM"/>
    <property type="match status" value="1"/>
</dbReference>
<dbReference type="InterPro" id="IPR020873">
    <property type="entry name" value="3'-5'_exoribonuclease_YhaM"/>
</dbReference>
<dbReference type="InterPro" id="IPR003607">
    <property type="entry name" value="HD/PDEase_dom"/>
</dbReference>
<dbReference type="InterPro" id="IPR006674">
    <property type="entry name" value="HD_domain"/>
</dbReference>
<dbReference type="InterPro" id="IPR012340">
    <property type="entry name" value="NA-bd_OB-fold"/>
</dbReference>
<dbReference type="InterPro" id="IPR004365">
    <property type="entry name" value="NA-bd_OB_tRNA"/>
</dbReference>
<dbReference type="InterPro" id="IPR050798">
    <property type="entry name" value="YhaM_exoribonuc/phosphodiest"/>
</dbReference>
<dbReference type="NCBIfam" id="NF010007">
    <property type="entry name" value="PRK13480.1"/>
    <property type="match status" value="1"/>
</dbReference>
<dbReference type="PANTHER" id="PTHR37294">
    <property type="entry name" value="3'-5' EXORIBONUCLEASE YHAM"/>
    <property type="match status" value="1"/>
</dbReference>
<dbReference type="PANTHER" id="PTHR37294:SF1">
    <property type="entry name" value="3'-5' EXORIBONUCLEASE YHAM"/>
    <property type="match status" value="1"/>
</dbReference>
<dbReference type="Pfam" id="PF01966">
    <property type="entry name" value="HD"/>
    <property type="match status" value="1"/>
</dbReference>
<dbReference type="Pfam" id="PF01336">
    <property type="entry name" value="tRNA_anti-codon"/>
    <property type="match status" value="1"/>
</dbReference>
<dbReference type="SMART" id="SM00471">
    <property type="entry name" value="HDc"/>
    <property type="match status" value="1"/>
</dbReference>
<dbReference type="SUPFAM" id="SSF109604">
    <property type="entry name" value="HD-domain/PDEase-like"/>
    <property type="match status" value="1"/>
</dbReference>
<dbReference type="SUPFAM" id="SSF50249">
    <property type="entry name" value="Nucleic acid-binding proteins"/>
    <property type="match status" value="1"/>
</dbReference>
<dbReference type="PROSITE" id="PS51831">
    <property type="entry name" value="HD"/>
    <property type="match status" value="1"/>
</dbReference>
<accession>A0RAN0</accession>